<evidence type="ECO:0000250" key="1"/>
<evidence type="ECO:0000255" key="2">
    <source>
        <dbReference type="HAMAP-Rule" id="MF_00480"/>
    </source>
</evidence>
<evidence type="ECO:0000305" key="3"/>
<gene>
    <name type="primary">rps7-A</name>
</gene>
<gene>
    <name type="primary">rps7-B</name>
</gene>
<dbReference type="EMBL" id="AP009369">
    <property type="protein sequence ID" value="BAF50069.1"/>
    <property type="molecule type" value="Genomic_DNA"/>
</dbReference>
<dbReference type="EMBL" id="AP009369">
    <property type="protein sequence ID" value="BAF50084.1"/>
    <property type="molecule type" value="Genomic_DNA"/>
</dbReference>
<dbReference type="SMR" id="A4QK64"/>
<dbReference type="GO" id="GO:0009507">
    <property type="term" value="C:chloroplast"/>
    <property type="evidence" value="ECO:0007669"/>
    <property type="project" value="UniProtKB-SubCell"/>
</dbReference>
<dbReference type="GO" id="GO:0015935">
    <property type="term" value="C:small ribosomal subunit"/>
    <property type="evidence" value="ECO:0007669"/>
    <property type="project" value="InterPro"/>
</dbReference>
<dbReference type="GO" id="GO:0019843">
    <property type="term" value="F:rRNA binding"/>
    <property type="evidence" value="ECO:0007669"/>
    <property type="project" value="UniProtKB-UniRule"/>
</dbReference>
<dbReference type="GO" id="GO:0003735">
    <property type="term" value="F:structural constituent of ribosome"/>
    <property type="evidence" value="ECO:0007669"/>
    <property type="project" value="InterPro"/>
</dbReference>
<dbReference type="GO" id="GO:0006412">
    <property type="term" value="P:translation"/>
    <property type="evidence" value="ECO:0007669"/>
    <property type="project" value="UniProtKB-UniRule"/>
</dbReference>
<dbReference type="CDD" id="cd14871">
    <property type="entry name" value="uS7_Chloroplast"/>
    <property type="match status" value="1"/>
</dbReference>
<dbReference type="FunFam" id="1.10.455.10:FF:000001">
    <property type="entry name" value="30S ribosomal protein S7"/>
    <property type="match status" value="1"/>
</dbReference>
<dbReference type="Gene3D" id="1.10.455.10">
    <property type="entry name" value="Ribosomal protein S7 domain"/>
    <property type="match status" value="1"/>
</dbReference>
<dbReference type="HAMAP" id="MF_00480_B">
    <property type="entry name" value="Ribosomal_uS7_B"/>
    <property type="match status" value="1"/>
</dbReference>
<dbReference type="InterPro" id="IPR000235">
    <property type="entry name" value="Ribosomal_uS7"/>
</dbReference>
<dbReference type="InterPro" id="IPR005717">
    <property type="entry name" value="Ribosomal_uS7_bac/org-type"/>
</dbReference>
<dbReference type="InterPro" id="IPR020606">
    <property type="entry name" value="Ribosomal_uS7_CS"/>
</dbReference>
<dbReference type="InterPro" id="IPR023798">
    <property type="entry name" value="Ribosomal_uS7_dom"/>
</dbReference>
<dbReference type="InterPro" id="IPR036823">
    <property type="entry name" value="Ribosomal_uS7_dom_sf"/>
</dbReference>
<dbReference type="NCBIfam" id="TIGR01029">
    <property type="entry name" value="rpsG_bact"/>
    <property type="match status" value="1"/>
</dbReference>
<dbReference type="PANTHER" id="PTHR11205">
    <property type="entry name" value="RIBOSOMAL PROTEIN S7"/>
    <property type="match status" value="1"/>
</dbReference>
<dbReference type="Pfam" id="PF00177">
    <property type="entry name" value="Ribosomal_S7"/>
    <property type="match status" value="1"/>
</dbReference>
<dbReference type="PIRSF" id="PIRSF002122">
    <property type="entry name" value="RPS7p_RPS7a_RPS5e_RPS7o"/>
    <property type="match status" value="1"/>
</dbReference>
<dbReference type="SUPFAM" id="SSF47973">
    <property type="entry name" value="Ribosomal protein S7"/>
    <property type="match status" value="1"/>
</dbReference>
<dbReference type="PROSITE" id="PS00052">
    <property type="entry name" value="RIBOSOMAL_S7"/>
    <property type="match status" value="1"/>
</dbReference>
<geneLocation type="chloroplast"/>
<name>RR7_ARAHI</name>
<organism>
    <name type="scientific">Arabis hirsuta</name>
    <name type="common">Hairy rock-cress</name>
    <name type="synonym">Turritis hirsuta</name>
    <dbReference type="NCBI Taxonomy" id="78191"/>
    <lineage>
        <taxon>Eukaryota</taxon>
        <taxon>Viridiplantae</taxon>
        <taxon>Streptophyta</taxon>
        <taxon>Embryophyta</taxon>
        <taxon>Tracheophyta</taxon>
        <taxon>Spermatophyta</taxon>
        <taxon>Magnoliopsida</taxon>
        <taxon>eudicotyledons</taxon>
        <taxon>Gunneridae</taxon>
        <taxon>Pentapetalae</taxon>
        <taxon>rosids</taxon>
        <taxon>malvids</taxon>
        <taxon>Brassicales</taxon>
        <taxon>Brassicaceae</taxon>
        <taxon>Arabideae</taxon>
        <taxon>Arabis</taxon>
    </lineage>
</organism>
<feature type="chain" id="PRO_0000344325" description="Small ribosomal subunit protein uS7cz/uS7cy">
    <location>
        <begin position="1"/>
        <end position="155"/>
    </location>
</feature>
<protein>
    <recommendedName>
        <fullName evidence="2">Small ribosomal subunit protein uS7cz/uS7cy</fullName>
    </recommendedName>
    <alternativeName>
        <fullName>30S ribosomal protein S7, chloroplastic</fullName>
    </alternativeName>
</protein>
<reference key="1">
    <citation type="submission" date="2007-03" db="EMBL/GenBank/DDBJ databases">
        <title>Sequencing analysis of Arabis hirsuta chloroplast DNA.</title>
        <authorList>
            <person name="Hosouchi T."/>
            <person name="Tsuruoka H."/>
            <person name="Kotani H."/>
        </authorList>
    </citation>
    <scope>NUCLEOTIDE SEQUENCE [LARGE SCALE GENOMIC DNA]</scope>
</reference>
<keyword id="KW-0150">Chloroplast</keyword>
<keyword id="KW-0934">Plastid</keyword>
<keyword id="KW-0687">Ribonucleoprotein</keyword>
<keyword id="KW-0689">Ribosomal protein</keyword>
<keyword id="KW-0694">RNA-binding</keyword>
<keyword id="KW-0699">rRNA-binding</keyword>
<proteinExistence type="inferred from homology"/>
<accession>A4QK64</accession>
<sequence>MSRRGTAEEKTAKSDPIYRNRLVNMLVNRILKHGKKSLAYQIIYRALKKIQQKTETNPLSVLRQAIRGVTPDIAVKARRVGGSTHQVPIEIGSTQGKALAIRWLLGASRKRPGRNMAFKLSSELVDAAKGSGDAIRKKEETHRMAEANRAFAHFR</sequence>
<comment type="function">
    <text evidence="1">One of the primary rRNA binding proteins, it binds directly to 16S rRNA where it nucleates assembly of the head domain of the 30S subunit.</text>
</comment>
<comment type="subunit">
    <text evidence="1">Part of the 30S ribosomal subunit.</text>
</comment>
<comment type="subcellular location">
    <subcellularLocation>
        <location>Plastid</location>
        <location>Chloroplast</location>
    </subcellularLocation>
</comment>
<comment type="similarity">
    <text evidence="3">Belongs to the universal ribosomal protein uS7 family.</text>
</comment>